<gene>
    <name type="primary">DSG1</name>
</gene>
<organism>
    <name type="scientific">Bos taurus</name>
    <name type="common">Bovine</name>
    <dbReference type="NCBI Taxonomy" id="9913"/>
    <lineage>
        <taxon>Eukaryota</taxon>
        <taxon>Metazoa</taxon>
        <taxon>Chordata</taxon>
        <taxon>Craniata</taxon>
        <taxon>Vertebrata</taxon>
        <taxon>Euteleostomi</taxon>
        <taxon>Mammalia</taxon>
        <taxon>Eutheria</taxon>
        <taxon>Laurasiatheria</taxon>
        <taxon>Artiodactyla</taxon>
        <taxon>Ruminantia</taxon>
        <taxon>Pecora</taxon>
        <taxon>Bovidae</taxon>
        <taxon>Bovinae</taxon>
        <taxon>Bos</taxon>
    </lineage>
</organism>
<feature type="signal peptide" evidence="4">
    <location>
        <begin position="1"/>
        <end position="23"/>
    </location>
</feature>
<feature type="propeptide" id="PRO_0000003833" evidence="4">
    <location>
        <begin position="24"/>
        <end position="49"/>
    </location>
</feature>
<feature type="chain" id="PRO_0000003834" description="Desmoglein-1">
    <location>
        <begin position="50"/>
        <end position="1043"/>
    </location>
</feature>
<feature type="topological domain" description="Extracellular" evidence="4">
    <location>
        <begin position="50"/>
        <end position="551"/>
    </location>
</feature>
<feature type="transmembrane region" description="Helical" evidence="4">
    <location>
        <begin position="552"/>
        <end position="572"/>
    </location>
</feature>
<feature type="topological domain" description="Cytoplasmic" evidence="4">
    <location>
        <begin position="573"/>
        <end position="1043"/>
    </location>
</feature>
<feature type="domain" description="Cadherin 1" evidence="5">
    <location>
        <begin position="50"/>
        <end position="158"/>
    </location>
</feature>
<feature type="domain" description="Cadherin 2" evidence="5">
    <location>
        <begin position="159"/>
        <end position="270"/>
    </location>
</feature>
<feature type="domain" description="Cadherin 3" evidence="5">
    <location>
        <begin position="271"/>
        <end position="385"/>
    </location>
</feature>
<feature type="domain" description="Cadherin 4" evidence="5">
    <location>
        <begin position="386"/>
        <end position="498"/>
    </location>
</feature>
<feature type="repeat" description="Desmoglein repeat 1">
    <location>
        <begin position="819"/>
        <end position="845"/>
    </location>
</feature>
<feature type="repeat" description="Desmoglein repeat 2">
    <location>
        <begin position="846"/>
        <end position="875"/>
    </location>
</feature>
<feature type="repeat" description="Desmoglein repeat 3">
    <location>
        <begin position="876"/>
        <end position="905"/>
    </location>
</feature>
<feature type="repeat" description="Desmoglein repeat 4">
    <location>
        <begin position="906"/>
        <end position="933"/>
    </location>
</feature>
<feature type="repeat" description="Desmoglein repeat 5">
    <location>
        <begin position="934"/>
        <end position="962"/>
    </location>
</feature>
<feature type="region of interest" description="Disordered" evidence="6">
    <location>
        <begin position="770"/>
        <end position="807"/>
    </location>
</feature>
<feature type="glycosylation site" description="N-linked (GlcNAc...) asparagine" evidence="9">
    <location>
        <position position="110"/>
    </location>
</feature>
<feature type="glycosylation site" description="N-linked (GlcNAc...) asparagine" evidence="4">
    <location>
        <position position="180"/>
    </location>
</feature>
<feature type="glycosylation site" description="N-linked (GlcNAc...) asparagine" evidence="4">
    <location>
        <position position="496"/>
    </location>
</feature>
<feature type="sequence conflict" description="In Ref. 2; no nucleotide entry and 5; AAA62709." evidence="11" ref="2 5">
    <original>I</original>
    <variation>V</variation>
    <location>
        <position position="124"/>
    </location>
</feature>
<feature type="sequence conflict" description="In Ref. 2; no nucleotide entry." evidence="11" ref="2">
    <original>M</original>
    <variation>N</variation>
    <location>
        <position position="889"/>
    </location>
</feature>
<feature type="sequence conflict" description="In Ref. 2; no nucleotide entry." evidence="11" ref="2">
    <original>M</original>
    <variation>N</variation>
    <location>
        <position position="945"/>
    </location>
</feature>
<comment type="function">
    <text evidence="2">Component of intercellular desmosome junctions (By similarity). Involved in the interaction of plaque proteins and intermediate filaments mediating cell-cell adhesion (By similarity).</text>
</comment>
<comment type="subunit">
    <text evidence="2">Binds to JUP/plakoglobin (By similarity). Interacts with PKP2 (By similarity). Interacts with DSC3; there is evidence to suggest that the interaction promotes cell-cell adhesion of keratinocytes (By similarity).</text>
</comment>
<comment type="subcellular location">
    <subcellularLocation>
        <location evidence="3">Cell membrane</location>
        <topology evidence="3">Single-pass type I membrane protein</topology>
    </subcellularLocation>
    <subcellularLocation>
        <location evidence="3">Cell junction</location>
        <location evidence="3">Desmosome</location>
    </subcellularLocation>
    <subcellularLocation>
        <location evidence="2">Cytoplasm</location>
    </subcellularLocation>
    <subcellularLocation>
        <location evidence="2">Nucleus</location>
    </subcellularLocation>
</comment>
<comment type="tissue specificity">
    <text evidence="7 8 10">Expressed in the epidermis (PubMed:1702628, PubMed:8294446). Expressed in the muzzle epithelium (PubMed:1706270).</text>
</comment>
<comment type="domain">
    <text evidence="1">Three calcium ions are usually bound at the interface of each cadherin domain and rigidify the connections, imparting a strong curvature to the full-length ectodomain.</text>
</comment>
<keyword id="KW-0106">Calcium</keyword>
<keyword id="KW-0130">Cell adhesion</keyword>
<keyword id="KW-0965">Cell junction</keyword>
<keyword id="KW-1003">Cell membrane</keyword>
<keyword id="KW-0165">Cleavage on pair of basic residues</keyword>
<keyword id="KW-0963">Cytoplasm</keyword>
<keyword id="KW-0903">Direct protein sequencing</keyword>
<keyword id="KW-0325">Glycoprotein</keyword>
<keyword id="KW-0472">Membrane</keyword>
<keyword id="KW-0479">Metal-binding</keyword>
<keyword id="KW-0539">Nucleus</keyword>
<keyword id="KW-1185">Reference proteome</keyword>
<keyword id="KW-0677">Repeat</keyword>
<keyword id="KW-0732">Signal</keyword>
<keyword id="KW-0812">Transmembrane</keyword>
<keyword id="KW-1133">Transmembrane helix</keyword>
<name>DSG1_BOVIN</name>
<proteinExistence type="evidence at protein level"/>
<reference key="1">
    <citation type="submission" date="1991-03" db="EMBL/GenBank/DDBJ databases">
        <authorList>
            <person name="Koch P.J."/>
            <person name="Goldschmidt M.D."/>
            <person name="Zimbelmann R."/>
            <person name="Franke W.W."/>
        </authorList>
    </citation>
    <scope>NUCLEOTIDE SEQUENCE [MRNA]</scope>
    <source>
        <tissue>Muzzle epithelium</tissue>
    </source>
</reference>
<reference key="2">
    <citation type="journal article" date="1994" name="J. Biol. Chem.">
        <title>Structure of DSG1, the bovine desmosomal cadherin gene encoding the pemphigus foliaceus antigen. Evidence of polymorphism.</title>
        <authorList>
            <person name="Puttagunta S."/>
            <person name="Mathur M."/>
            <person name="Cowin P."/>
        </authorList>
    </citation>
    <scope>NUCLEOTIDE SEQUENCE [MRNA]</scope>
    <scope>TISSUE SPECIFICITY</scope>
    <source>
        <tissue>Thymus</tissue>
    </source>
</reference>
<reference key="3">
    <citation type="journal article" date="1990" name="Eur. J. Cell Biol.">
        <title>Identification of desmoglein, a constitutive desmosomal glycoprotein, as a member of the cadherin family of cell adhesion molecules.</title>
        <authorList>
            <person name="Koch P.J."/>
            <person name="Walsh M.J."/>
            <person name="Schmelz M."/>
            <person name="Goldschmidt M.D."/>
            <person name="Zimbelmann R."/>
            <person name="Franke W.W."/>
        </authorList>
    </citation>
    <scope>NUCLEOTIDE SEQUENCE [MRNA] OF 44-1043</scope>
    <scope>TISSUE SPECIFICITY</scope>
    <source>
        <tissue>Muzzle epithelium</tissue>
    </source>
</reference>
<reference key="4">
    <citation type="journal article" date="1991" name="Eur. J. Cell Biol.">
        <title>Complete amino acid sequence of the epidermal desmoglein precursor polypeptide and identification of a second type of desmoglein gene.</title>
        <authorList>
            <person name="Koch P.J."/>
            <person name="Goldschmidt M.D."/>
            <person name="Walsh M.J."/>
            <person name="Zimbelmann R."/>
            <person name="Franke W.W."/>
        </authorList>
    </citation>
    <scope>PROTEIN SEQUENCE OF 101-123</scope>
    <scope>SEQUENCE REVISION</scope>
    <scope>GLYCOSYLATION AT ASN-110</scope>
</reference>
<reference key="5">
    <citation type="journal article" date="1990" name="Biochem. Biophys. Res. Commun.">
        <title>Desmoglein shows extensive homology to the cadherin family of cell adhesion molecules.</title>
        <authorList>
            <person name="Goodwin L."/>
            <person name="Hill J.E."/>
            <person name="Raynor K."/>
            <person name="Raszi L."/>
            <person name="Manabe M."/>
            <person name="Cowin P."/>
        </authorList>
    </citation>
    <scope>NUCLEOTIDE SEQUENCE [MRNA] OF 44-493</scope>
    <scope>TISSUE SPECIFICITY</scope>
</reference>
<protein>
    <recommendedName>
        <fullName>Desmoglein-1</fullName>
    </recommendedName>
    <alternativeName>
        <fullName>Desmosomal glycoprotein 1</fullName>
        <shortName>DG1</shortName>
        <shortName>DGI</shortName>
    </alternativeName>
    <alternativeName>
        <fullName>Pemphigus foliaceus antigen</fullName>
    </alternativeName>
</protein>
<sequence>MNWPFFRAAVVLFIFLVVLEVNSDFRIQVRDYNTKNGTIKWHSLRRQKREWIKFAAACREGEDNSKRNPIAKIHSDCAANQQVTYRISGVGIDQPPYGIFVINQKTGEINITSIVDREVTPFFIIYCRALNSLGQDLEKPLELRVRVLDINDNPPVFSMSTFVGEIEENSNANTLVMVLNATDADEPNNLNSKIAFKIIRQEPSDSPMFIINRYTGEIRTMNNFLDREQYGQYSLAVRGSDRDGGADGMSAECECNIKILDVNDNIPYMELPTQSISIEENSLNSNLLQIRVIDLDEEFSANWMAVIFFISGNEGNWFEIEMNERTNVGTLKVVKPLDFEAMNNLQLSLGVRNKAEFHQSIMSQYKLTATAISVTVLNVVEGSVFRPGSKTFVVNSNMGQNYKIGEYVAWDLDANRPSTTVRYVMGRNPTDLLAIDSKTAIITLRNKVTMEQYKILGGKYQGTILSIDDALQRTCTGTIVINLENGGWKTERPNVNGSTTSAYGLTSGGVTTNGYTTGGGVGTVTFAVGTNGYGVGTGVYQPLRDNVHFGPAGIGLLIMGFLVLGLVPFLLMCCDCGGAPGGGAAFEPVPECSDGAIHSWAVEGAQADPGVLANSAVPCIPVTNANVIEYVDNSGVYTNEYGAREMQDLGGGERTTGFELTDGVKMSGGPEICQEYPGTLRRNSMRECREGGLNMNFMESYFCQKAYAYADEDEGRPSNDCLLIYDIEGAGSPAGSVGCCSFIGEDLDDSFLDTLGPKFKKLADISLGKDVEPFPDSDPSWPPKSTEPVCPPQGTEPTGGGHPPISPRFGTTTVISENTYPSGPGVQHPTPIPDPLGYGNVTVTESYTSSGTLKPSVHIHDNRHASNVVVTERVVGPISGADLQGMLEMPDLRDGSNVIVTERVIAPSSSLPTTLTIPDPRQSSNVVVTERVIQPTSGIVGNLSMHPELSNTHNVIVTERVVSGSGITGSSSLLGSAGGGSGGGIGLGSLGGGGGLSSSLGGAATIGHLRGSAEHHFSNTLGSASPTTTRSRITKYSTVQYTK</sequence>
<evidence type="ECO:0000250" key="1"/>
<evidence type="ECO:0000250" key="2">
    <source>
        <dbReference type="UniProtKB" id="Q02413"/>
    </source>
</evidence>
<evidence type="ECO:0000250" key="3">
    <source>
        <dbReference type="UniProtKB" id="Q7TSF1"/>
    </source>
</evidence>
<evidence type="ECO:0000255" key="4"/>
<evidence type="ECO:0000255" key="5">
    <source>
        <dbReference type="PROSITE-ProRule" id="PRU00043"/>
    </source>
</evidence>
<evidence type="ECO:0000256" key="6">
    <source>
        <dbReference type="SAM" id="MobiDB-lite"/>
    </source>
</evidence>
<evidence type="ECO:0000269" key="7">
    <source>
    </source>
</evidence>
<evidence type="ECO:0000269" key="8">
    <source>
    </source>
</evidence>
<evidence type="ECO:0000269" key="9">
    <source>
    </source>
</evidence>
<evidence type="ECO:0000269" key="10">
    <source>
    </source>
</evidence>
<evidence type="ECO:0000305" key="11"/>
<dbReference type="EMBL" id="X58466">
    <property type="protein sequence ID" value="CAA41380.1"/>
    <property type="molecule type" value="mRNA"/>
</dbReference>
<dbReference type="EMBL" id="X57784">
    <property type="protein sequence ID" value="CAA40930.1"/>
    <property type="molecule type" value="mRNA"/>
</dbReference>
<dbReference type="EMBL" id="M58165">
    <property type="protein sequence ID" value="AAA62709.1"/>
    <property type="molecule type" value="mRNA"/>
</dbReference>
<dbReference type="PIR" id="S14603">
    <property type="entry name" value="IJBOG1"/>
</dbReference>
<dbReference type="RefSeq" id="NP_776470.1">
    <property type="nucleotide sequence ID" value="NM_174045.1"/>
</dbReference>
<dbReference type="SMR" id="Q03763"/>
<dbReference type="FunCoup" id="Q03763">
    <property type="interactions" value="39"/>
</dbReference>
<dbReference type="STRING" id="9913.ENSBTAP00000018382"/>
<dbReference type="GlyCosmos" id="Q03763">
    <property type="glycosylation" value="3 sites, No reported glycans"/>
</dbReference>
<dbReference type="GlyGen" id="Q03763">
    <property type="glycosylation" value="3 sites"/>
</dbReference>
<dbReference type="iPTMnet" id="Q03763"/>
<dbReference type="PaxDb" id="9913-ENSBTAP00000018382"/>
<dbReference type="GeneID" id="281131"/>
<dbReference type="KEGG" id="bta:281131"/>
<dbReference type="CTD" id="1828"/>
<dbReference type="eggNOG" id="KOG3594">
    <property type="taxonomic scope" value="Eukaryota"/>
</dbReference>
<dbReference type="InParanoid" id="Q03763"/>
<dbReference type="OrthoDB" id="8961010at2759"/>
<dbReference type="Proteomes" id="UP000009136">
    <property type="component" value="Unplaced"/>
</dbReference>
<dbReference type="GO" id="GO:0005737">
    <property type="term" value="C:cytoplasm"/>
    <property type="evidence" value="ECO:0007669"/>
    <property type="project" value="UniProtKB-SubCell"/>
</dbReference>
<dbReference type="GO" id="GO:0030057">
    <property type="term" value="C:desmosome"/>
    <property type="evidence" value="ECO:0000314"/>
    <property type="project" value="BHF-UCL"/>
</dbReference>
<dbReference type="GO" id="GO:0005634">
    <property type="term" value="C:nucleus"/>
    <property type="evidence" value="ECO:0007669"/>
    <property type="project" value="UniProtKB-SubCell"/>
</dbReference>
<dbReference type="GO" id="GO:0005886">
    <property type="term" value="C:plasma membrane"/>
    <property type="evidence" value="ECO:0007669"/>
    <property type="project" value="UniProtKB-SubCell"/>
</dbReference>
<dbReference type="GO" id="GO:0005509">
    <property type="term" value="F:calcium ion binding"/>
    <property type="evidence" value="ECO:0000318"/>
    <property type="project" value="GO_Central"/>
</dbReference>
<dbReference type="GO" id="GO:0045295">
    <property type="term" value="F:gamma-catenin binding"/>
    <property type="evidence" value="ECO:0000353"/>
    <property type="project" value="BHF-UCL"/>
</dbReference>
<dbReference type="GO" id="GO:0098609">
    <property type="term" value="P:cell-cell adhesion"/>
    <property type="evidence" value="ECO:0000318"/>
    <property type="project" value="GO_Central"/>
</dbReference>
<dbReference type="GO" id="GO:0007156">
    <property type="term" value="P:homophilic cell adhesion via plasma membrane adhesion molecules"/>
    <property type="evidence" value="ECO:0007669"/>
    <property type="project" value="InterPro"/>
</dbReference>
<dbReference type="CDD" id="cd11304">
    <property type="entry name" value="Cadherin_repeat"/>
    <property type="match status" value="4"/>
</dbReference>
<dbReference type="FunFam" id="2.60.40.60:FF:000011">
    <property type="entry name" value="Cadherin 1"/>
    <property type="match status" value="1"/>
</dbReference>
<dbReference type="FunFam" id="2.60.40.60:FF:000068">
    <property type="entry name" value="Desmoglein 1"/>
    <property type="match status" value="1"/>
</dbReference>
<dbReference type="FunFam" id="2.60.40.60:FF:000083">
    <property type="entry name" value="Desmoglein 1"/>
    <property type="match status" value="1"/>
</dbReference>
<dbReference type="FunFam" id="2.60.40.60:FF:000238">
    <property type="entry name" value="Desmoglein 1"/>
    <property type="match status" value="1"/>
</dbReference>
<dbReference type="FunFam" id="4.10.900.10:FF:000003">
    <property type="entry name" value="Desmoglein 1"/>
    <property type="match status" value="1"/>
</dbReference>
<dbReference type="Gene3D" id="2.60.40.60">
    <property type="entry name" value="Cadherins"/>
    <property type="match status" value="4"/>
</dbReference>
<dbReference type="Gene3D" id="4.10.900.10">
    <property type="entry name" value="TCF3-CBD (Catenin binding domain)"/>
    <property type="match status" value="1"/>
</dbReference>
<dbReference type="InterPro" id="IPR050971">
    <property type="entry name" value="Cadherin-domain_protein"/>
</dbReference>
<dbReference type="InterPro" id="IPR002126">
    <property type="entry name" value="Cadherin-like_dom"/>
</dbReference>
<dbReference type="InterPro" id="IPR015919">
    <property type="entry name" value="Cadherin-like_sf"/>
</dbReference>
<dbReference type="InterPro" id="IPR020894">
    <property type="entry name" value="Cadherin_CS"/>
</dbReference>
<dbReference type="InterPro" id="IPR000233">
    <property type="entry name" value="Cadherin_Y-type_LIR"/>
</dbReference>
<dbReference type="InterPro" id="IPR027397">
    <property type="entry name" value="Catenin-bd_sf"/>
</dbReference>
<dbReference type="InterPro" id="IPR009122">
    <property type="entry name" value="Desmosomal_cadherin"/>
</dbReference>
<dbReference type="PANTHER" id="PTHR24025">
    <property type="entry name" value="DESMOGLEIN FAMILY MEMBER"/>
    <property type="match status" value="1"/>
</dbReference>
<dbReference type="PANTHER" id="PTHR24025:SF9">
    <property type="entry name" value="DESMOGLEIN-1"/>
    <property type="match status" value="1"/>
</dbReference>
<dbReference type="Pfam" id="PF01049">
    <property type="entry name" value="CADH_Y-type_LIR"/>
    <property type="match status" value="1"/>
</dbReference>
<dbReference type="Pfam" id="PF00028">
    <property type="entry name" value="Cadherin"/>
    <property type="match status" value="3"/>
</dbReference>
<dbReference type="PRINTS" id="PR00205">
    <property type="entry name" value="CADHERIN"/>
</dbReference>
<dbReference type="PRINTS" id="PR01818">
    <property type="entry name" value="DESMOCADHERN"/>
</dbReference>
<dbReference type="PRINTS" id="PR01819">
    <property type="entry name" value="DESMOGLEIN"/>
</dbReference>
<dbReference type="SMART" id="SM00112">
    <property type="entry name" value="CA"/>
    <property type="match status" value="3"/>
</dbReference>
<dbReference type="SUPFAM" id="SSF49313">
    <property type="entry name" value="Cadherin-like"/>
    <property type="match status" value="4"/>
</dbReference>
<dbReference type="PROSITE" id="PS00232">
    <property type="entry name" value="CADHERIN_1"/>
    <property type="match status" value="2"/>
</dbReference>
<dbReference type="PROSITE" id="PS50268">
    <property type="entry name" value="CADHERIN_2"/>
    <property type="match status" value="4"/>
</dbReference>
<accession>Q03763</accession>
<accession>Q9TS15</accession>